<name>RS32_RABIT</name>
<sequence>MRAKWRKKRMRRLKRKRRKMRQRSK</sequence>
<reference key="1">
    <citation type="journal article" date="2011" name="Nature">
        <title>A high-resolution map of human evolutionary constraint using 29 mammals.</title>
        <authorList>
            <person name="Lindblad-Toh K."/>
            <person name="Garber M."/>
            <person name="Zuk O."/>
            <person name="Lin M.F."/>
            <person name="Parker B.J."/>
            <person name="Washietl S."/>
            <person name="Kheradpour P."/>
            <person name="Ernst J."/>
            <person name="Jordan G."/>
            <person name="Mauceli E."/>
            <person name="Ward L.D."/>
            <person name="Lowe C.B."/>
            <person name="Holloway A.K."/>
            <person name="Clamp M."/>
            <person name="Gnerre S."/>
            <person name="Alfoldi J."/>
            <person name="Beal K."/>
            <person name="Chang J."/>
            <person name="Clawson H."/>
            <person name="Cuff J."/>
            <person name="Di Palma F."/>
            <person name="Fitzgerald S."/>
            <person name="Flicek P."/>
            <person name="Guttman M."/>
            <person name="Hubisz M.J."/>
            <person name="Jaffe D.B."/>
            <person name="Jungreis I."/>
            <person name="Kent W.J."/>
            <person name="Kostka D."/>
            <person name="Lara M."/>
            <person name="Martins A.L."/>
            <person name="Massingham T."/>
            <person name="Moltke I."/>
            <person name="Raney B.J."/>
            <person name="Rasmussen M.D."/>
            <person name="Robinson J."/>
            <person name="Stark A."/>
            <person name="Vilella A.J."/>
            <person name="Wen J."/>
            <person name="Xie X."/>
            <person name="Zody M.C."/>
            <person name="Baldwin J."/>
            <person name="Bloom T."/>
            <person name="Chin C.W."/>
            <person name="Heiman D."/>
            <person name="Nicol R."/>
            <person name="Nusbaum C."/>
            <person name="Young S."/>
            <person name="Wilkinson J."/>
            <person name="Worley K.C."/>
            <person name="Kovar C.L."/>
            <person name="Muzny D.M."/>
            <person name="Gibbs R.A."/>
            <person name="Cree A."/>
            <person name="Dihn H.H."/>
            <person name="Fowler G."/>
            <person name="Jhangiani S."/>
            <person name="Joshi V."/>
            <person name="Lee S."/>
            <person name="Lewis L.R."/>
            <person name="Nazareth L.V."/>
            <person name="Okwuonu G."/>
            <person name="Santibanez J."/>
            <person name="Warren W.C."/>
            <person name="Mardis E.R."/>
            <person name="Weinstock G.M."/>
            <person name="Wilson R.K."/>
            <person name="Delehaunty K."/>
            <person name="Dooling D."/>
            <person name="Fronik C."/>
            <person name="Fulton L."/>
            <person name="Fulton B."/>
            <person name="Graves T."/>
            <person name="Minx P."/>
            <person name="Sodergren E."/>
            <person name="Birney E."/>
            <person name="Margulies E.H."/>
            <person name="Herrero J."/>
            <person name="Green E.D."/>
            <person name="Haussler D."/>
            <person name="Siepel A."/>
            <person name="Goldman N."/>
            <person name="Pollard K.S."/>
            <person name="Pedersen J.S."/>
            <person name="Lander E.S."/>
            <person name="Kellis M."/>
        </authorList>
    </citation>
    <scope>NUCLEOTIDE SEQUENCE [LARGE SCALE GENOMIC DNA]</scope>
    <source>
        <strain>Thorbecke</strain>
    </source>
</reference>
<reference evidence="14" key="2">
    <citation type="journal article" date="2014" name="Cell">
        <title>Regulation of the mammalian elongation cycle by subunit rolling: a eukaryotic-specific ribosome rearrangement.</title>
        <authorList>
            <person name="Budkevich T.V."/>
            <person name="Giesebrecht J."/>
            <person name="Behrmann E."/>
            <person name="Loerke J."/>
            <person name="Ramrath D.J."/>
            <person name="Mielke T."/>
            <person name="Ismer J."/>
            <person name="Hildebrand P.W."/>
            <person name="Tung C.S."/>
            <person name="Nierhaus K.H."/>
            <person name="Sanbonmatsu K.Y."/>
            <person name="Spahn C.M."/>
        </authorList>
    </citation>
    <scope>STRUCTURE BY ELECTRON MICROSCOPY (6.90 ANGSTROMS) OF RIBOSOME</scope>
    <scope>FUNCTION</scope>
    <scope>SUBUNIT</scope>
    <scope>SUBCELLULAR LOCATION</scope>
</reference>
<reference evidence="15 16" key="3">
    <citation type="journal article" date="2015" name="Nature">
        <title>Structural basis for stop codon recognition in eukaryotes.</title>
        <authorList>
            <person name="Brown A."/>
            <person name="Shao S."/>
            <person name="Murray J."/>
            <person name="Hegde R.S."/>
            <person name="Ramakrishnan V."/>
        </authorList>
    </citation>
    <scope>STRUCTURE BY ELECTRON MICROSCOPY (3.45 ANGSTROMS) OF 2-24 OF RIBOSOME</scope>
    <scope>SUBCELLULAR LOCATION</scope>
    <scope>SUBUNIT</scope>
</reference>
<reference evidence="17" key="4">
    <citation type="journal article" date="2016" name="Cell">
        <title>Decoding mammalian ribosome-mRNA states by translational GTPase complexes.</title>
        <authorList>
            <person name="Shao S."/>
            <person name="Murray J."/>
            <person name="Brown A."/>
            <person name="Taunton J."/>
            <person name="Ramakrishnan V."/>
            <person name="Hegde R.S."/>
        </authorList>
    </citation>
    <scope>STRUCTURE BY ELECTRON MICROSCOPY (3.75 ANGSTROMS) OF RIBOSOME</scope>
    <scope>FUNCTION</scope>
    <scope>SUBCELLULAR LOCATION</scope>
    <scope>SUBUNIT</scope>
</reference>
<reference evidence="20 21" key="5">
    <citation type="journal article" date="2019" name="Elife">
        <title>Structural and mutational analysis of the ribosome-arresting human XBP1u.</title>
        <authorList>
            <person name="Shanmuganathan V."/>
            <person name="Schiller N."/>
            <person name="Magoulopoulou A."/>
            <person name="Cheng J."/>
            <person name="Braunger K."/>
            <person name="Cymer F."/>
            <person name="Berninghausen O."/>
            <person name="Beatrix B."/>
            <person name="Kohno K."/>
            <person name="von Heijne G."/>
            <person name="Beckmann R."/>
        </authorList>
    </citation>
    <scope>STRUCTURE BY ELECTRON MICROSCOPY (3.00 ANGSTROMS) OF RIBOSOME</scope>
    <scope>SUBCELLULAR LOCATION</scope>
    <scope>SUBUNIT</scope>
</reference>
<reference evidence="18 19" key="6">
    <citation type="journal article" date="2019" name="EMBO J.">
        <title>The Israeli acute paralysis virus IRES captures host ribosomes by mimicking a ribosomal state with hybrid tRNAs.</title>
        <authorList>
            <person name="Acosta-Reyes F."/>
            <person name="Neupane R."/>
            <person name="Frank J."/>
            <person name="Fernandez I.S."/>
        </authorList>
    </citation>
    <scope>STRUCTURE BY ELECTRON MICROSCOPY (3.10 ANGSTROMS) OF RIBOSOME</scope>
    <scope>SUBCELLULAR LOCATION</scope>
    <scope>SUBUNIT</scope>
</reference>
<reference evidence="22" key="7">
    <citation type="journal article" date="2019" name="Nat. Struct. Mol. Biol.">
        <title>Mechanism of ribosome stalling during translation of a poly(A) tail.</title>
        <authorList>
            <person name="Chandrasekaran V."/>
            <person name="Juszkiewicz S."/>
            <person name="Choi J."/>
            <person name="Puglisi J.D."/>
            <person name="Brown A."/>
            <person name="Shao S."/>
            <person name="Ramakrishnan V."/>
            <person name="Hegde R.S."/>
        </authorList>
    </citation>
    <scope>STRUCTURE BY ELECTRON MICROSCOPY (2.80 ANGSTROMS) OF RIBOSOME</scope>
    <scope>SUBCELLULAR LOCATION</scope>
    <scope>SUBUNIT</scope>
</reference>
<reference evidence="23 24" key="8">
    <citation type="journal article" date="2020" name="Cell Rep.">
        <title>The Halastavi arva virus intergenic region IRES promotes translation by the simplest possible initiation mechanism.</title>
        <authorList>
            <person name="Abaeva I.S."/>
            <person name="Vicens Q."/>
            <person name="Bochler A."/>
            <person name="Soufari H."/>
            <person name="Simonetti A."/>
            <person name="Pestova T.V."/>
            <person name="Hashem Y."/>
            <person name="Hellen C.U.T."/>
        </authorList>
    </citation>
    <scope>STRUCTURE BY ELECTRON MICROSCOPY (3.49 ANGSTROMS) OF 2-24 OF RIBOSOME</scope>
    <scope>SUBCELLULAR LOCATION</scope>
    <scope>SUBUNIT</scope>
</reference>
<reference evidence="25" key="9">
    <citation type="journal article" date="2023" name="Nature">
        <title>A molecular network of conserved factors keeps ribosomes dormant in the egg.</title>
        <authorList>
            <person name="Leesch F."/>
            <person name="Lorenzo-Orts L."/>
            <person name="Pribitzer C."/>
            <person name="Grishkovskaya I."/>
            <person name="Roehsner J."/>
            <person name="Chugunova A."/>
            <person name="Matzinger M."/>
            <person name="Roitinger E."/>
            <person name="Belacic K."/>
            <person name="Kandolf S."/>
            <person name="Lin T.Y."/>
            <person name="Mechtler K."/>
            <person name="Meinhart A."/>
            <person name="Haselbach D."/>
            <person name="Pauli A."/>
        </authorList>
    </citation>
    <scope>STRUCTURE BY ELECTRON MICROSCOPY (2.30 ANGSTROMS) OF RIBOSOME</scope>
    <scope>SUBCELLULAR LOCATION</scope>
    <scope>SUBUNIT</scope>
</reference>
<reference evidence="26 27" key="10">
    <citation type="journal article" date="2022" name="EMBO J.">
        <title>Molecular architecture of 40S translation initiation complexes on the hepatitis C virus IRES.</title>
        <authorList>
            <person name="Brown Z.P."/>
            <person name="Abaeva I.S."/>
            <person name="De S."/>
            <person name="Hellen C.U.T."/>
            <person name="Pestova T.V."/>
            <person name="Frank J."/>
        </authorList>
    </citation>
    <scope>STRUCTURE BY ELECTRON MICROSCOPY (3.50 ANGSTROMS) OF RIBOSOME</scope>
    <scope>SUBCELLULAR LOCATION</scope>
    <scope>SUBUNIT</scope>
</reference>
<accession>A0A087WNH4</accession>
<gene>
    <name type="primary">RPL41</name>
</gene>
<keyword id="KW-0002">3D-structure</keyword>
<keyword id="KW-0963">Cytoplasm</keyword>
<keyword id="KW-1185">Reference proteome</keyword>
<keyword id="KW-0687">Ribonucleoprotein</keyword>
<keyword id="KW-0689">Ribosomal protein</keyword>
<evidence type="ECO:0000250" key="1">
    <source>
        <dbReference type="UniProtKB" id="P62945"/>
    </source>
</evidence>
<evidence type="ECO:0000255" key="2">
    <source>
        <dbReference type="RuleBase" id="RU368055"/>
    </source>
</evidence>
<evidence type="ECO:0000256" key="3">
    <source>
        <dbReference type="SAM" id="MobiDB-lite"/>
    </source>
</evidence>
<evidence type="ECO:0000269" key="4">
    <source>
    </source>
</evidence>
<evidence type="ECO:0000269" key="5">
    <source>
    </source>
</evidence>
<evidence type="ECO:0000269" key="6">
    <source>
    </source>
</evidence>
<evidence type="ECO:0000269" key="7">
    <source>
    </source>
</evidence>
<evidence type="ECO:0000269" key="8">
    <source>
    </source>
</evidence>
<evidence type="ECO:0000269" key="9">
    <source>
    </source>
</evidence>
<evidence type="ECO:0000269" key="10">
    <source>
    </source>
</evidence>
<evidence type="ECO:0000269" key="11">
    <source>
    </source>
</evidence>
<evidence type="ECO:0000269" key="12">
    <source>
    </source>
</evidence>
<evidence type="ECO:0000305" key="13"/>
<evidence type="ECO:0000312" key="14">
    <source>
        <dbReference type="PDB" id="4UJE"/>
    </source>
</evidence>
<evidence type="ECO:0007744" key="15">
    <source>
        <dbReference type="PDB" id="3JAG"/>
    </source>
</evidence>
<evidence type="ECO:0007744" key="16">
    <source>
        <dbReference type="PDB" id="3JAH"/>
    </source>
</evidence>
<evidence type="ECO:0007744" key="17">
    <source>
        <dbReference type="PDB" id="5LZU"/>
    </source>
</evidence>
<evidence type="ECO:0007744" key="18">
    <source>
        <dbReference type="PDB" id="6P4G"/>
    </source>
</evidence>
<evidence type="ECO:0007744" key="19">
    <source>
        <dbReference type="PDB" id="6P4H"/>
    </source>
</evidence>
<evidence type="ECO:0007744" key="20">
    <source>
        <dbReference type="PDB" id="6R5Q"/>
    </source>
</evidence>
<evidence type="ECO:0007744" key="21">
    <source>
        <dbReference type="PDB" id="6R6G"/>
    </source>
</evidence>
<evidence type="ECO:0007744" key="22">
    <source>
        <dbReference type="PDB" id="6SGC"/>
    </source>
</evidence>
<evidence type="ECO:0007744" key="23">
    <source>
        <dbReference type="PDB" id="6ZVK"/>
    </source>
</evidence>
<evidence type="ECO:0007744" key="24">
    <source>
        <dbReference type="PDB" id="7A01"/>
    </source>
</evidence>
<evidence type="ECO:0007744" key="25">
    <source>
        <dbReference type="PDB" id="7OYD"/>
    </source>
</evidence>
<evidence type="ECO:0007744" key="26">
    <source>
        <dbReference type="PDB" id="7SYO"/>
    </source>
</evidence>
<evidence type="ECO:0007744" key="27">
    <source>
        <dbReference type="PDB" id="7SYP"/>
    </source>
</evidence>
<evidence type="ECO:0007829" key="28">
    <source>
        <dbReference type="PDB" id="6YAL"/>
    </source>
</evidence>
<organism>
    <name type="scientific">Oryctolagus cuniculus</name>
    <name type="common">Rabbit</name>
    <dbReference type="NCBI Taxonomy" id="9986"/>
    <lineage>
        <taxon>Eukaryota</taxon>
        <taxon>Metazoa</taxon>
        <taxon>Chordata</taxon>
        <taxon>Craniata</taxon>
        <taxon>Vertebrata</taxon>
        <taxon>Euteleostomi</taxon>
        <taxon>Mammalia</taxon>
        <taxon>Eutheria</taxon>
        <taxon>Euarchontoglires</taxon>
        <taxon>Glires</taxon>
        <taxon>Lagomorpha</taxon>
        <taxon>Leporidae</taxon>
        <taxon>Oryctolagus</taxon>
    </lineage>
</organism>
<dbReference type="EMBL" id="AAGW02059138">
    <property type="status" value="NOT_ANNOTATED_CDS"/>
    <property type="molecule type" value="Genomic_DNA"/>
</dbReference>
<dbReference type="PDB" id="3JAG">
    <property type="method" value="EM"/>
    <property type="resolution" value="3.65 A"/>
    <property type="chains" value="n=2-24"/>
</dbReference>
<dbReference type="PDB" id="3JAH">
    <property type="method" value="EM"/>
    <property type="resolution" value="3.45 A"/>
    <property type="chains" value="n=2-24"/>
</dbReference>
<dbReference type="PDB" id="3JAI">
    <property type="method" value="EM"/>
    <property type="resolution" value="3.65 A"/>
    <property type="chains" value="n=2-24"/>
</dbReference>
<dbReference type="PDB" id="4UJE">
    <property type="method" value="EM"/>
    <property type="resolution" value="6.90 A"/>
    <property type="chains" value="n=1-25"/>
</dbReference>
<dbReference type="PDB" id="5LZU">
    <property type="method" value="EM"/>
    <property type="resolution" value="3.75 A"/>
    <property type="chains" value="n=1-25"/>
</dbReference>
<dbReference type="PDB" id="6FTG">
    <property type="method" value="EM"/>
    <property type="resolution" value="9.10 A"/>
    <property type="chains" value="n=2-24"/>
</dbReference>
<dbReference type="PDB" id="6FTI">
    <property type="method" value="EM"/>
    <property type="resolution" value="4.20 A"/>
    <property type="chains" value="n=2-24"/>
</dbReference>
<dbReference type="PDB" id="6FTJ">
    <property type="method" value="EM"/>
    <property type="resolution" value="4.70 A"/>
    <property type="chains" value="n=2-24"/>
</dbReference>
<dbReference type="PDB" id="6P4G">
    <property type="method" value="EM"/>
    <property type="resolution" value="3.10 A"/>
    <property type="chains" value="n=1-25"/>
</dbReference>
<dbReference type="PDB" id="6P4H">
    <property type="method" value="EM"/>
    <property type="resolution" value="3.20 A"/>
    <property type="chains" value="n=1-25"/>
</dbReference>
<dbReference type="PDB" id="6P5I">
    <property type="method" value="EM"/>
    <property type="resolution" value="3.10 A"/>
    <property type="chains" value="An=1-25"/>
</dbReference>
<dbReference type="PDB" id="6P5J">
    <property type="method" value="EM"/>
    <property type="resolution" value="3.10 A"/>
    <property type="chains" value="An=1-25"/>
</dbReference>
<dbReference type="PDB" id="6P5K">
    <property type="method" value="EM"/>
    <property type="resolution" value="3.10 A"/>
    <property type="chains" value="An=1-25"/>
</dbReference>
<dbReference type="PDB" id="6P5N">
    <property type="method" value="EM"/>
    <property type="resolution" value="3.20 A"/>
    <property type="chains" value="An=1-25"/>
</dbReference>
<dbReference type="PDB" id="6R5Q">
    <property type="method" value="EM"/>
    <property type="resolution" value="3.00 A"/>
    <property type="chains" value="n=1-25"/>
</dbReference>
<dbReference type="PDB" id="6R6G">
    <property type="method" value="EM"/>
    <property type="resolution" value="3.70 A"/>
    <property type="chains" value="n=1-25"/>
</dbReference>
<dbReference type="PDB" id="6R6P">
    <property type="method" value="EM"/>
    <property type="resolution" value="3.10 A"/>
    <property type="chains" value="n=2-24"/>
</dbReference>
<dbReference type="PDB" id="6R7Q">
    <property type="method" value="EM"/>
    <property type="resolution" value="3.90 A"/>
    <property type="chains" value="n=1-25"/>
</dbReference>
<dbReference type="PDB" id="6SGC">
    <property type="method" value="EM"/>
    <property type="resolution" value="2.80 A"/>
    <property type="chains" value="n2=1-25"/>
</dbReference>
<dbReference type="PDB" id="6T59">
    <property type="method" value="EM"/>
    <property type="resolution" value="3.11 A"/>
    <property type="chains" value="n3=1-25"/>
</dbReference>
<dbReference type="PDB" id="6YAL">
    <property type="method" value="EM"/>
    <property type="resolution" value="3.00 A"/>
    <property type="chains" value="l=1-25"/>
</dbReference>
<dbReference type="PDB" id="6YAM">
    <property type="method" value="EM"/>
    <property type="resolution" value="3.60 A"/>
    <property type="chains" value="l=1-25"/>
</dbReference>
<dbReference type="PDB" id="6YAN">
    <property type="method" value="EM"/>
    <property type="resolution" value="3.48 A"/>
    <property type="chains" value="l=1-25"/>
</dbReference>
<dbReference type="PDB" id="6ZVK">
    <property type="method" value="EM"/>
    <property type="resolution" value="3.49 A"/>
    <property type="chains" value="X3=2-24"/>
</dbReference>
<dbReference type="PDB" id="7A01">
    <property type="method" value="EM"/>
    <property type="resolution" value="3.60 A"/>
    <property type="chains" value="X3=2-24"/>
</dbReference>
<dbReference type="PDB" id="7MDZ">
    <property type="method" value="EM"/>
    <property type="resolution" value="3.20 A"/>
    <property type="chains" value="n=1-25"/>
</dbReference>
<dbReference type="PDB" id="7NFX">
    <property type="method" value="EM"/>
    <property type="resolution" value="3.20 A"/>
    <property type="chains" value="n=1-25"/>
</dbReference>
<dbReference type="PDB" id="7NWG">
    <property type="method" value="EM"/>
    <property type="resolution" value="3.80 A"/>
    <property type="chains" value="n3=1-25"/>
</dbReference>
<dbReference type="PDB" id="7NWH">
    <property type="method" value="EM"/>
    <property type="resolution" value="4.10 A"/>
    <property type="chains" value="n=1-25"/>
</dbReference>
<dbReference type="PDB" id="7NWI">
    <property type="method" value="EM"/>
    <property type="resolution" value="3.13 A"/>
    <property type="chains" value="n=2-24"/>
</dbReference>
<dbReference type="PDB" id="7O7Y">
    <property type="method" value="EM"/>
    <property type="resolution" value="2.20 A"/>
    <property type="chains" value="Az=1-25"/>
</dbReference>
<dbReference type="PDB" id="7O7Z">
    <property type="method" value="EM"/>
    <property type="resolution" value="2.40 A"/>
    <property type="chains" value="Az=1-25"/>
</dbReference>
<dbReference type="PDB" id="7O80">
    <property type="method" value="EM"/>
    <property type="resolution" value="2.90 A"/>
    <property type="chains" value="Az=1-25"/>
</dbReference>
<dbReference type="PDB" id="7O81">
    <property type="method" value="EM"/>
    <property type="resolution" value="3.10 A"/>
    <property type="chains" value="Az=1-25"/>
</dbReference>
<dbReference type="PDB" id="7OBR">
    <property type="method" value="EM"/>
    <property type="resolution" value="2.80 A"/>
    <property type="chains" value="n=1-25"/>
</dbReference>
<dbReference type="PDB" id="7OYD">
    <property type="method" value="EM"/>
    <property type="resolution" value="2.30 A"/>
    <property type="chains" value="n=1-25"/>
</dbReference>
<dbReference type="PDB" id="7QWQ">
    <property type="method" value="EM"/>
    <property type="resolution" value="2.83 A"/>
    <property type="chains" value="n=1-25"/>
</dbReference>
<dbReference type="PDB" id="7QWR">
    <property type="method" value="EM"/>
    <property type="resolution" value="2.90 A"/>
    <property type="chains" value="n=1-25"/>
</dbReference>
<dbReference type="PDB" id="7QWS">
    <property type="method" value="EM"/>
    <property type="resolution" value="3.40 A"/>
    <property type="chains" value="n=1-25"/>
</dbReference>
<dbReference type="PDB" id="7SYG">
    <property type="method" value="EM"/>
    <property type="resolution" value="4.30 A"/>
    <property type="chains" value="n=1-25"/>
</dbReference>
<dbReference type="PDB" id="7SYH">
    <property type="method" value="EM"/>
    <property type="resolution" value="4.60 A"/>
    <property type="chains" value="n=1-25"/>
</dbReference>
<dbReference type="PDB" id="7SYI">
    <property type="method" value="EM"/>
    <property type="resolution" value="4.50 A"/>
    <property type="chains" value="n=1-25"/>
</dbReference>
<dbReference type="PDB" id="7SYJ">
    <property type="method" value="EM"/>
    <property type="resolution" value="4.80 A"/>
    <property type="chains" value="n=1-25"/>
</dbReference>
<dbReference type="PDB" id="7SYK">
    <property type="method" value="EM"/>
    <property type="resolution" value="4.20 A"/>
    <property type="chains" value="n=1-25"/>
</dbReference>
<dbReference type="PDB" id="7SYL">
    <property type="method" value="EM"/>
    <property type="resolution" value="4.50 A"/>
    <property type="chains" value="n=1-25"/>
</dbReference>
<dbReference type="PDB" id="7SYM">
    <property type="method" value="EM"/>
    <property type="resolution" value="4.80 A"/>
    <property type="chains" value="n=1-25"/>
</dbReference>
<dbReference type="PDB" id="7SYN">
    <property type="method" value="EM"/>
    <property type="resolution" value="4.00 A"/>
    <property type="chains" value="n=1-25"/>
</dbReference>
<dbReference type="PDB" id="7SYO">
    <property type="method" value="EM"/>
    <property type="resolution" value="4.60 A"/>
    <property type="chains" value="n=1-25"/>
</dbReference>
<dbReference type="PDB" id="7SYP">
    <property type="method" value="EM"/>
    <property type="resolution" value="4.00 A"/>
    <property type="chains" value="n=1-25"/>
</dbReference>
<dbReference type="PDB" id="7SYQ">
    <property type="method" value="EM"/>
    <property type="resolution" value="3.80 A"/>
    <property type="chains" value="n=1-25"/>
</dbReference>
<dbReference type="PDB" id="7SYR">
    <property type="method" value="EM"/>
    <property type="resolution" value="3.60 A"/>
    <property type="chains" value="n=1-25"/>
</dbReference>
<dbReference type="PDB" id="7SYS">
    <property type="method" value="EM"/>
    <property type="resolution" value="3.50 A"/>
    <property type="chains" value="n=1-25"/>
</dbReference>
<dbReference type="PDB" id="7SYT">
    <property type="method" value="EM"/>
    <property type="resolution" value="4.40 A"/>
    <property type="chains" value="n=1-25"/>
</dbReference>
<dbReference type="PDB" id="7SYU">
    <property type="method" value="EM"/>
    <property type="resolution" value="4.60 A"/>
    <property type="chains" value="n=1-25"/>
</dbReference>
<dbReference type="PDB" id="7SYV">
    <property type="method" value="EM"/>
    <property type="resolution" value="3.90 A"/>
    <property type="chains" value="n=1-25"/>
</dbReference>
<dbReference type="PDB" id="7SYW">
    <property type="method" value="EM"/>
    <property type="resolution" value="3.70 A"/>
    <property type="chains" value="n=1-25"/>
</dbReference>
<dbReference type="PDB" id="7SYX">
    <property type="method" value="EM"/>
    <property type="resolution" value="3.70 A"/>
    <property type="chains" value="n=1-25"/>
</dbReference>
<dbReference type="PDB" id="7TM3">
    <property type="method" value="EM"/>
    <property type="resolution" value="3.25 A"/>
    <property type="chains" value="n=1-25"/>
</dbReference>
<dbReference type="PDB" id="7TOR">
    <property type="method" value="EM"/>
    <property type="resolution" value="2.90 A"/>
    <property type="chains" value="AL41=1-25"/>
</dbReference>
<dbReference type="PDB" id="7TUT">
    <property type="method" value="EM"/>
    <property type="resolution" value="3.88 A"/>
    <property type="chains" value="n=1-25"/>
</dbReference>
<dbReference type="PDB" id="7UCJ">
    <property type="method" value="EM"/>
    <property type="resolution" value="3.10 A"/>
    <property type="chains" value="n=1-25"/>
</dbReference>
<dbReference type="PDB" id="7UCK">
    <property type="method" value="EM"/>
    <property type="resolution" value="2.80 A"/>
    <property type="chains" value="n=1-25"/>
</dbReference>
<dbReference type="PDB" id="7ZJW">
    <property type="method" value="EM"/>
    <property type="resolution" value="2.80 A"/>
    <property type="chains" value="Sl=1-25"/>
</dbReference>
<dbReference type="PDB" id="7ZJX">
    <property type="method" value="EM"/>
    <property type="resolution" value="3.10 A"/>
    <property type="chains" value="Sl=1-25"/>
</dbReference>
<dbReference type="PDB" id="8B5L">
    <property type="method" value="EM"/>
    <property type="resolution" value="2.86 A"/>
    <property type="chains" value="n=1-25"/>
</dbReference>
<dbReference type="PDB" id="8B6C">
    <property type="method" value="EM"/>
    <property type="resolution" value="2.79 A"/>
    <property type="chains" value="n=1-25"/>
</dbReference>
<dbReference type="PDB" id="8BHF">
    <property type="method" value="EM"/>
    <property type="resolution" value="3.10 A"/>
    <property type="chains" value="a1=1-25"/>
</dbReference>
<dbReference type="PDB" id="8BPO">
    <property type="method" value="EM"/>
    <property type="resolution" value="2.80 A"/>
    <property type="chains" value="m2=1-25"/>
</dbReference>
<dbReference type="PDB" id="8BTK">
    <property type="method" value="EM"/>
    <property type="resolution" value="3.50 A"/>
    <property type="chains" value="Az=1-25"/>
</dbReference>
<dbReference type="PDB" id="8P03">
    <property type="method" value="EM"/>
    <property type="resolution" value="3.04 A"/>
    <property type="chains" value="l=1-25"/>
</dbReference>
<dbReference type="PDB" id="8P09">
    <property type="method" value="EM"/>
    <property type="resolution" value="3.30 A"/>
    <property type="chains" value="l=1-25"/>
</dbReference>
<dbReference type="PDB" id="8P2K">
    <property type="method" value="EM"/>
    <property type="resolution" value="2.90 A"/>
    <property type="chains" value="Az=1-25"/>
</dbReference>
<dbReference type="PDB" id="8Q7Z">
    <property type="method" value="EM"/>
    <property type="resolution" value="2.50 A"/>
    <property type="chains" value="Az=1-25"/>
</dbReference>
<dbReference type="PDB" id="8Q87">
    <property type="method" value="EM"/>
    <property type="resolution" value="2.40 A"/>
    <property type="chains" value="Az=1-25"/>
</dbReference>
<dbReference type="PDB" id="8RJB">
    <property type="method" value="EM"/>
    <property type="resolution" value="2.69 A"/>
    <property type="chains" value="n=1-25"/>
</dbReference>
<dbReference type="PDB" id="8RJC">
    <property type="method" value="EM"/>
    <property type="resolution" value="2.90 A"/>
    <property type="chains" value="n=1-25"/>
</dbReference>
<dbReference type="PDB" id="8RJD">
    <property type="method" value="EM"/>
    <property type="resolution" value="2.79 A"/>
    <property type="chains" value="n=1-25"/>
</dbReference>
<dbReference type="PDB" id="8SCB">
    <property type="method" value="EM"/>
    <property type="resolution" value="2.50 A"/>
    <property type="chains" value="n=1-25"/>
</dbReference>
<dbReference type="PDB" id="8VFT">
    <property type="method" value="EM"/>
    <property type="resolution" value="3.30 A"/>
    <property type="chains" value="n=1-25"/>
</dbReference>
<dbReference type="PDB" id="9BDL">
    <property type="method" value="EM"/>
    <property type="resolution" value="2.80 A"/>
    <property type="chains" value="AL41=1-25"/>
</dbReference>
<dbReference type="PDB" id="9BDN">
    <property type="method" value="EM"/>
    <property type="resolution" value="3.10 A"/>
    <property type="chains" value="AL41=1-25"/>
</dbReference>
<dbReference type="PDB" id="9BDP">
    <property type="method" value="EM"/>
    <property type="resolution" value="3.70 A"/>
    <property type="chains" value="AL41=1-25"/>
</dbReference>
<dbReference type="PDB" id="9F1B">
    <property type="method" value="EM"/>
    <property type="resolution" value="3.01 A"/>
    <property type="chains" value="Az=1-25"/>
</dbReference>
<dbReference type="PDB" id="9F1C">
    <property type="method" value="EM"/>
    <property type="resolution" value="3.78 A"/>
    <property type="chains" value="Az=1-25"/>
</dbReference>
<dbReference type="PDB" id="9F1D">
    <property type="method" value="EM"/>
    <property type="resolution" value="3.26 A"/>
    <property type="chains" value="Az=1-25"/>
</dbReference>
<dbReference type="PDBsum" id="3JAG"/>
<dbReference type="PDBsum" id="3JAH"/>
<dbReference type="PDBsum" id="3JAI"/>
<dbReference type="PDBsum" id="4UJE"/>
<dbReference type="PDBsum" id="5LZU"/>
<dbReference type="PDBsum" id="6FTG"/>
<dbReference type="PDBsum" id="6FTI"/>
<dbReference type="PDBsum" id="6FTJ"/>
<dbReference type="PDBsum" id="6P4G"/>
<dbReference type="PDBsum" id="6P4H"/>
<dbReference type="PDBsum" id="6P5I"/>
<dbReference type="PDBsum" id="6P5J"/>
<dbReference type="PDBsum" id="6P5K"/>
<dbReference type="PDBsum" id="6P5N"/>
<dbReference type="PDBsum" id="6R5Q"/>
<dbReference type="PDBsum" id="6R6G"/>
<dbReference type="PDBsum" id="6R6P"/>
<dbReference type="PDBsum" id="6R7Q"/>
<dbReference type="PDBsum" id="6SGC"/>
<dbReference type="PDBsum" id="6T59"/>
<dbReference type="PDBsum" id="6YAL"/>
<dbReference type="PDBsum" id="6YAM"/>
<dbReference type="PDBsum" id="6YAN"/>
<dbReference type="PDBsum" id="6ZVK"/>
<dbReference type="PDBsum" id="7A01"/>
<dbReference type="PDBsum" id="7MDZ"/>
<dbReference type="PDBsum" id="7NFX"/>
<dbReference type="PDBsum" id="7NWG"/>
<dbReference type="PDBsum" id="7NWH"/>
<dbReference type="PDBsum" id="7NWI"/>
<dbReference type="PDBsum" id="7O7Y"/>
<dbReference type="PDBsum" id="7O7Z"/>
<dbReference type="PDBsum" id="7O80"/>
<dbReference type="PDBsum" id="7O81"/>
<dbReference type="PDBsum" id="7OBR"/>
<dbReference type="PDBsum" id="7OYD"/>
<dbReference type="PDBsum" id="7QWQ"/>
<dbReference type="PDBsum" id="7QWR"/>
<dbReference type="PDBsum" id="7QWS"/>
<dbReference type="PDBsum" id="7SYG"/>
<dbReference type="PDBsum" id="7SYH"/>
<dbReference type="PDBsum" id="7SYI"/>
<dbReference type="PDBsum" id="7SYJ"/>
<dbReference type="PDBsum" id="7SYK"/>
<dbReference type="PDBsum" id="7SYL"/>
<dbReference type="PDBsum" id="7SYM"/>
<dbReference type="PDBsum" id="7SYN"/>
<dbReference type="PDBsum" id="7SYO"/>
<dbReference type="PDBsum" id="7SYP"/>
<dbReference type="PDBsum" id="7SYQ"/>
<dbReference type="PDBsum" id="7SYR"/>
<dbReference type="PDBsum" id="7SYS"/>
<dbReference type="PDBsum" id="7SYT"/>
<dbReference type="PDBsum" id="7SYU"/>
<dbReference type="PDBsum" id="7SYV"/>
<dbReference type="PDBsum" id="7SYW"/>
<dbReference type="PDBsum" id="7SYX"/>
<dbReference type="PDBsum" id="7TM3"/>
<dbReference type="PDBsum" id="7TOR"/>
<dbReference type="PDBsum" id="7TUT"/>
<dbReference type="PDBsum" id="7UCJ"/>
<dbReference type="PDBsum" id="7UCK"/>
<dbReference type="PDBsum" id="7ZJW"/>
<dbReference type="PDBsum" id="7ZJX"/>
<dbReference type="PDBsum" id="8B5L"/>
<dbReference type="PDBsum" id="8B6C"/>
<dbReference type="PDBsum" id="8BHF"/>
<dbReference type="PDBsum" id="8BPO"/>
<dbReference type="PDBsum" id="8BTK"/>
<dbReference type="PDBsum" id="8P03"/>
<dbReference type="PDBsum" id="8P09"/>
<dbReference type="PDBsum" id="8P2K"/>
<dbReference type="PDBsum" id="8Q7Z"/>
<dbReference type="PDBsum" id="8Q87"/>
<dbReference type="PDBsum" id="8RJB"/>
<dbReference type="PDBsum" id="8RJC"/>
<dbReference type="PDBsum" id="8RJD"/>
<dbReference type="PDBsum" id="8SCB"/>
<dbReference type="PDBsum" id="8VFT"/>
<dbReference type="PDBsum" id="9BDL"/>
<dbReference type="PDBsum" id="9BDN"/>
<dbReference type="PDBsum" id="9BDP"/>
<dbReference type="PDBsum" id="9F1B"/>
<dbReference type="PDBsum" id="9F1C"/>
<dbReference type="PDBsum" id="9F1D"/>
<dbReference type="EMDB" id="EMD-10181"/>
<dbReference type="EMDB" id="EMD-10380"/>
<dbReference type="EMDB" id="EMD-10760"/>
<dbReference type="EMDB" id="EMD-10761"/>
<dbReference type="EMDB" id="EMD-10762"/>
<dbReference type="EMDB" id="EMD-11459"/>
<dbReference type="EMDB" id="EMD-11590"/>
<dbReference type="EMDB" id="EMD-12303"/>
<dbReference type="EMDB" id="EMD-12631"/>
<dbReference type="EMDB" id="EMD-12632"/>
<dbReference type="EMDB" id="EMD-12633"/>
<dbReference type="EMDB" id="EMD-12756"/>
<dbReference type="EMDB" id="EMD-12757"/>
<dbReference type="EMDB" id="EMD-12758"/>
<dbReference type="EMDB" id="EMD-12759"/>
<dbReference type="EMDB" id="EMD-12801"/>
<dbReference type="EMDB" id="EMD-13114"/>
<dbReference type="EMDB" id="EMD-14191"/>
<dbReference type="EMDB" id="EMD-14192"/>
<dbReference type="EMDB" id="EMD-14193"/>
<dbReference type="EMDB" id="EMD-14751"/>
<dbReference type="EMDB" id="EMD-14752"/>
<dbReference type="EMDB" id="EMD-15860"/>
<dbReference type="EMDB" id="EMD-15863"/>
<dbReference type="EMDB" id="EMD-16052"/>
<dbReference type="EMDB" id="EMD-16155"/>
<dbReference type="EMDB" id="EMD-16232"/>
<dbReference type="EMDB" id="EMD-17329"/>
<dbReference type="EMDB" id="EMD-17330"/>
<dbReference type="EMDB" id="EMD-17367"/>
<dbReference type="EMDB" id="EMD-19195"/>
<dbReference type="EMDB" id="EMD-19197"/>
<dbReference type="EMDB" id="EMD-19198"/>
<dbReference type="EMDB" id="EMD-20248"/>
<dbReference type="EMDB" id="EMD-20249"/>
<dbReference type="EMDB" id="EMD-20255"/>
<dbReference type="EMDB" id="EMD-20256"/>
<dbReference type="EMDB" id="EMD-20257"/>
<dbReference type="EMDB" id="EMD-20258"/>
<dbReference type="EMDB" id="EMD-23785"/>
<dbReference type="EMDB" id="EMD-25527"/>
<dbReference type="EMDB" id="EMD-25528"/>
<dbReference type="EMDB" id="EMD-25529"/>
<dbReference type="EMDB" id="EMD-25530"/>
<dbReference type="EMDB" id="EMD-25531"/>
<dbReference type="EMDB" id="EMD-25532"/>
<dbReference type="EMDB" id="EMD-25533"/>
<dbReference type="EMDB" id="EMD-25534"/>
<dbReference type="EMDB" id="EMD-25535"/>
<dbReference type="EMDB" id="EMD-25536"/>
<dbReference type="EMDB" id="EMD-25537"/>
<dbReference type="EMDB" id="EMD-25538"/>
<dbReference type="EMDB" id="EMD-25539"/>
<dbReference type="EMDB" id="EMD-25540"/>
<dbReference type="EMDB" id="EMD-25541"/>
<dbReference type="EMDB" id="EMD-25542"/>
<dbReference type="EMDB" id="EMD-25543"/>
<dbReference type="EMDB" id="EMD-25544"/>
<dbReference type="EMDB" id="EMD-25994"/>
<dbReference type="EMDB" id="EMD-26036"/>
<dbReference type="EMDB" id="EMD-26133"/>
<dbReference type="EMDB" id="EMD-26444"/>
<dbReference type="EMDB" id="EMD-26445"/>
<dbReference type="EMDB" id="EMD-40344"/>
<dbReference type="EMDB" id="EMD-4132"/>
<dbReference type="EMDB" id="EMD-4315"/>
<dbReference type="EMDB" id="EMD-4316"/>
<dbReference type="EMDB" id="EMD-4317"/>
<dbReference type="EMDB" id="EMD-43189"/>
<dbReference type="EMDB" id="EMD-44461"/>
<dbReference type="EMDB" id="EMD-44463"/>
<dbReference type="EMDB" id="EMD-44464"/>
<dbReference type="EMDB" id="EMD-4729"/>
<dbReference type="EMDB" id="EMD-4735"/>
<dbReference type="EMDB" id="EMD-4737"/>
<dbReference type="EMDB" id="EMD-4745"/>
<dbReference type="EMDB" id="EMD-50124"/>
<dbReference type="EMDB" id="EMD-50125"/>
<dbReference type="EMDB" id="EMD-50126"/>
<dbReference type="SMR" id="A0A087WNH4"/>
<dbReference type="IntAct" id="A0A087WNH4">
    <property type="interactions" value="1"/>
</dbReference>
<dbReference type="Ensembl" id="ENSOCUT00000057808.1">
    <property type="protein sequence ID" value="ENSOCUP00000033163.1"/>
    <property type="gene ID" value="ENSOCUG00000037702.1"/>
</dbReference>
<dbReference type="Proteomes" id="UP000001811">
    <property type="component" value="Chromosome 4"/>
</dbReference>
<dbReference type="Bgee" id="ENSOCUG00000037702">
    <property type="expression patterns" value="Expressed in skin of back and 17 other cell types or tissues"/>
</dbReference>
<dbReference type="GO" id="GO:0005737">
    <property type="term" value="C:cytoplasm"/>
    <property type="evidence" value="ECO:0007669"/>
    <property type="project" value="UniProtKB-SubCell"/>
</dbReference>
<dbReference type="GO" id="GO:1990904">
    <property type="term" value="C:ribonucleoprotein complex"/>
    <property type="evidence" value="ECO:0007669"/>
    <property type="project" value="UniProtKB-KW"/>
</dbReference>
<dbReference type="GO" id="GO:0005840">
    <property type="term" value="C:ribosome"/>
    <property type="evidence" value="ECO:0007669"/>
    <property type="project" value="UniProtKB-KW"/>
</dbReference>
<dbReference type="GO" id="GO:0003735">
    <property type="term" value="F:structural constituent of ribosome"/>
    <property type="evidence" value="ECO:0007669"/>
    <property type="project" value="InterPro"/>
</dbReference>
<dbReference type="GO" id="GO:0006412">
    <property type="term" value="P:translation"/>
    <property type="evidence" value="ECO:0007669"/>
    <property type="project" value="InterPro"/>
</dbReference>
<dbReference type="InterPro" id="IPR007836">
    <property type="entry name" value="Ribosomal_eS32"/>
</dbReference>
<dbReference type="Pfam" id="PF05162">
    <property type="entry name" value="Ribosomal_L41"/>
    <property type="match status" value="1"/>
</dbReference>
<feature type="chain" id="PRO_0000460085" description="Small ribosomal subunit protein eS32">
    <location>
        <begin position="1"/>
        <end position="25"/>
    </location>
</feature>
<feature type="region of interest" description="Disordered" evidence="3">
    <location>
        <begin position="1"/>
        <end position="25"/>
    </location>
</feature>
<feature type="helix" evidence="28">
    <location>
        <begin position="2"/>
        <end position="24"/>
    </location>
</feature>
<proteinExistence type="evidence at protein level"/>
<protein>
    <recommendedName>
        <fullName>Small ribosomal subunit protein eS32</fullName>
    </recommendedName>
    <alternativeName>
        <fullName evidence="2">60S ribosomal protein L41</fullName>
    </alternativeName>
    <alternativeName>
        <fullName>Large ribosomal subunit protein eL41</fullName>
    </alternativeName>
</protein>
<comment type="function">
    <text evidence="1 4 6">Component of the small ribosomal subunit (PubMed:24995983, PubMed:27863242). The ribosome is a large ribonucleoprotein complex responsible for the synthesis of proteins in the cell (PubMed:24995983, PubMed:27863242). Interacts with the beta subunit of protein kinase CKII and stimulates phosphorylation of DNA topoisomerase II alpha by CKII (By similarity).</text>
</comment>
<comment type="subunit">
    <text evidence="4 5 6 7 8 9 10 11 12">Component of the small ribosomal subunit.</text>
</comment>
<comment type="subcellular location">
    <subcellularLocation>
        <location evidence="4 5 6 7 8 9 10 11 12">Cytoplasm</location>
    </subcellularLocation>
</comment>
<comment type="similarity">
    <text evidence="13">Belongs to the eukaryotic ribosomal protein eS32 family.</text>
</comment>